<gene>
    <name type="primary">NDUFA9</name>
    <name type="synonym">NDUFS2L</name>
</gene>
<dbReference type="EMBL" id="AF050641">
    <property type="protein sequence ID" value="AAD42055.1"/>
    <property type="molecule type" value="mRNA"/>
</dbReference>
<dbReference type="EMBL" id="BC009311">
    <property type="protein sequence ID" value="AAH09311.1"/>
    <property type="molecule type" value="mRNA"/>
</dbReference>
<dbReference type="EMBL" id="BC015837">
    <property type="protein sequence ID" value="AAH15837.1"/>
    <property type="molecule type" value="mRNA"/>
</dbReference>
<dbReference type="EMBL" id="BC111546">
    <property type="protein sequence ID" value="AAI11547.1"/>
    <property type="molecule type" value="mRNA"/>
</dbReference>
<dbReference type="EMBL" id="X76665">
    <property type="protein sequence ID" value="CAA54099.1"/>
    <property type="status" value="ALT_FRAME"/>
    <property type="molecule type" value="Genomic_DNA"/>
</dbReference>
<dbReference type="EMBL" id="L04490">
    <property type="protein sequence ID" value="AAA36350.1"/>
    <property type="molecule type" value="mRNA"/>
</dbReference>
<dbReference type="CCDS" id="CCDS8532.1"/>
<dbReference type="PIR" id="I37258">
    <property type="entry name" value="I37258"/>
</dbReference>
<dbReference type="RefSeq" id="NP_004993.1">
    <property type="nucleotide sequence ID" value="NM_005002.5"/>
</dbReference>
<dbReference type="PDB" id="5XTB">
    <property type="method" value="EM"/>
    <property type="resolution" value="3.40 A"/>
    <property type="chains" value="J=40-376"/>
</dbReference>
<dbReference type="PDB" id="5XTD">
    <property type="method" value="EM"/>
    <property type="resolution" value="3.70 A"/>
    <property type="chains" value="J=40-376"/>
</dbReference>
<dbReference type="PDB" id="5XTH">
    <property type="method" value="EM"/>
    <property type="resolution" value="3.90 A"/>
    <property type="chains" value="J=40-376"/>
</dbReference>
<dbReference type="PDB" id="5XTI">
    <property type="method" value="EM"/>
    <property type="resolution" value="17.40 A"/>
    <property type="chains" value="BJ/J=40-376"/>
</dbReference>
<dbReference type="PDBsum" id="5XTB"/>
<dbReference type="PDBsum" id="5XTD"/>
<dbReference type="PDBsum" id="5XTH"/>
<dbReference type="PDBsum" id="5XTI"/>
<dbReference type="SMR" id="Q16795"/>
<dbReference type="BioGRID" id="110784">
    <property type="interactions" value="346"/>
</dbReference>
<dbReference type="ComplexPortal" id="CPX-577">
    <property type="entry name" value="Mitochondrial respiratory chain complex I"/>
</dbReference>
<dbReference type="CORUM" id="Q16795"/>
<dbReference type="DIP" id="DIP-38526N"/>
<dbReference type="FunCoup" id="Q16795">
    <property type="interactions" value="2517"/>
</dbReference>
<dbReference type="IntAct" id="Q16795">
    <property type="interactions" value="123"/>
</dbReference>
<dbReference type="MINT" id="Q16795"/>
<dbReference type="STRING" id="9606.ENSP00000266544"/>
<dbReference type="BindingDB" id="Q16795"/>
<dbReference type="ChEMBL" id="CHEMBL2363065"/>
<dbReference type="DrugBank" id="DB03147">
    <property type="generic name" value="Flavin adenine dinucleotide"/>
</dbReference>
<dbReference type="DrugBank" id="DB00157">
    <property type="generic name" value="NADH"/>
</dbReference>
<dbReference type="DrugCentral" id="Q16795"/>
<dbReference type="CarbonylDB" id="Q16795"/>
<dbReference type="GlyGen" id="Q16795">
    <property type="glycosylation" value="1 site, 1 O-linked glycan (1 site)"/>
</dbReference>
<dbReference type="iPTMnet" id="Q16795"/>
<dbReference type="PhosphoSitePlus" id="Q16795"/>
<dbReference type="SwissPalm" id="Q16795"/>
<dbReference type="BioMuta" id="NDUFA9"/>
<dbReference type="DMDM" id="2833280"/>
<dbReference type="jPOST" id="Q16795"/>
<dbReference type="MassIVE" id="Q16795"/>
<dbReference type="PaxDb" id="9606-ENSP00000266544"/>
<dbReference type="PeptideAtlas" id="Q16795"/>
<dbReference type="ProteomicsDB" id="61072"/>
<dbReference type="Pumba" id="Q16795"/>
<dbReference type="TopDownProteomics" id="Q16795"/>
<dbReference type="Antibodypedia" id="22301">
    <property type="antibodies" value="258 antibodies from 30 providers"/>
</dbReference>
<dbReference type="DNASU" id="4704"/>
<dbReference type="Ensembl" id="ENST00000266544.10">
    <property type="protein sequence ID" value="ENSP00000266544.5"/>
    <property type="gene ID" value="ENSG00000139180.11"/>
</dbReference>
<dbReference type="GeneID" id="4704"/>
<dbReference type="KEGG" id="hsa:4704"/>
<dbReference type="MANE-Select" id="ENST00000266544.10">
    <property type="protein sequence ID" value="ENSP00000266544.5"/>
    <property type="RefSeq nucleotide sequence ID" value="NM_005002.5"/>
    <property type="RefSeq protein sequence ID" value="NP_004993.1"/>
</dbReference>
<dbReference type="UCSC" id="uc001qnc.4">
    <property type="organism name" value="human"/>
</dbReference>
<dbReference type="AGR" id="HGNC:7693"/>
<dbReference type="CTD" id="4704"/>
<dbReference type="DisGeNET" id="4704"/>
<dbReference type="GeneCards" id="NDUFA9"/>
<dbReference type="HGNC" id="HGNC:7693">
    <property type="gene designation" value="NDUFA9"/>
</dbReference>
<dbReference type="HPA" id="ENSG00000139180">
    <property type="expression patterns" value="Low tissue specificity"/>
</dbReference>
<dbReference type="MalaCards" id="NDUFA9"/>
<dbReference type="MIM" id="603834">
    <property type="type" value="gene"/>
</dbReference>
<dbReference type="MIM" id="618247">
    <property type="type" value="phenotype"/>
</dbReference>
<dbReference type="neXtProt" id="NX_Q16795"/>
<dbReference type="OpenTargets" id="ENSG00000139180"/>
<dbReference type="PharmGKB" id="PA31499"/>
<dbReference type="VEuPathDB" id="HostDB:ENSG00000139180"/>
<dbReference type="eggNOG" id="KOG2865">
    <property type="taxonomic scope" value="Eukaryota"/>
</dbReference>
<dbReference type="GeneTree" id="ENSGT00390000006865"/>
<dbReference type="HOGENOM" id="CLU_007383_6_4_1"/>
<dbReference type="InParanoid" id="Q16795"/>
<dbReference type="OMA" id="PEDQFTN"/>
<dbReference type="OrthoDB" id="275457at2759"/>
<dbReference type="PAN-GO" id="Q16795">
    <property type="GO annotations" value="3 GO annotations based on evolutionary models"/>
</dbReference>
<dbReference type="PhylomeDB" id="Q16795"/>
<dbReference type="TreeFam" id="TF105961"/>
<dbReference type="BioCyc" id="MetaCyc:HS06589-MONOMER"/>
<dbReference type="PathwayCommons" id="Q16795"/>
<dbReference type="Reactome" id="R-HSA-611105">
    <property type="pathway name" value="Respiratory electron transport"/>
</dbReference>
<dbReference type="Reactome" id="R-HSA-6799198">
    <property type="pathway name" value="Complex I biogenesis"/>
</dbReference>
<dbReference type="SignaLink" id="Q16795"/>
<dbReference type="SIGNOR" id="Q16795"/>
<dbReference type="BioGRID-ORCS" id="4704">
    <property type="hits" value="185 hits in 1172 CRISPR screens"/>
</dbReference>
<dbReference type="CD-CODE" id="91857CE7">
    <property type="entry name" value="Nucleolus"/>
</dbReference>
<dbReference type="CD-CODE" id="FB4E32DD">
    <property type="entry name" value="Presynaptic clusters and postsynaptic densities"/>
</dbReference>
<dbReference type="ChiTaRS" id="NDUFA9">
    <property type="organism name" value="human"/>
</dbReference>
<dbReference type="GeneWiki" id="NDUFA9"/>
<dbReference type="GenomeRNAi" id="4704"/>
<dbReference type="Pharos" id="Q16795">
    <property type="development level" value="Tclin"/>
</dbReference>
<dbReference type="PRO" id="PR:Q16795"/>
<dbReference type="Proteomes" id="UP000005640">
    <property type="component" value="Chromosome 12"/>
</dbReference>
<dbReference type="RNAct" id="Q16795">
    <property type="molecule type" value="protein"/>
</dbReference>
<dbReference type="Bgee" id="ENSG00000139180">
    <property type="expression patterns" value="Expressed in apex of heart and 205 other cell types or tissues"/>
</dbReference>
<dbReference type="ExpressionAtlas" id="Q16795">
    <property type="expression patterns" value="baseline and differential"/>
</dbReference>
<dbReference type="GO" id="GO:0005743">
    <property type="term" value="C:mitochondrial inner membrane"/>
    <property type="evidence" value="ECO:0000314"/>
    <property type="project" value="ComplexPortal"/>
</dbReference>
<dbReference type="GO" id="GO:0005759">
    <property type="term" value="C:mitochondrial matrix"/>
    <property type="evidence" value="ECO:0000314"/>
    <property type="project" value="UniProtKB"/>
</dbReference>
<dbReference type="GO" id="GO:0031966">
    <property type="term" value="C:mitochondrial membrane"/>
    <property type="evidence" value="ECO:0000314"/>
    <property type="project" value="UniProtKB"/>
</dbReference>
<dbReference type="GO" id="GO:0005739">
    <property type="term" value="C:mitochondrion"/>
    <property type="evidence" value="ECO:0006056"/>
    <property type="project" value="FlyBase"/>
</dbReference>
<dbReference type="GO" id="GO:0005634">
    <property type="term" value="C:nucleus"/>
    <property type="evidence" value="ECO:0007005"/>
    <property type="project" value="UniProtKB"/>
</dbReference>
<dbReference type="GO" id="GO:0045271">
    <property type="term" value="C:respiratory chain complex I"/>
    <property type="evidence" value="ECO:0000314"/>
    <property type="project" value="UniProtKB"/>
</dbReference>
<dbReference type="GO" id="GO:0008137">
    <property type="term" value="F:NADH dehydrogenase (ubiquinone) activity"/>
    <property type="evidence" value="ECO:0000303"/>
    <property type="project" value="UniProtKB"/>
</dbReference>
<dbReference type="GO" id="GO:0003954">
    <property type="term" value="F:NADH dehydrogenase activity"/>
    <property type="evidence" value="ECO:0000315"/>
    <property type="project" value="UniProtKB"/>
</dbReference>
<dbReference type="GO" id="GO:0044877">
    <property type="term" value="F:protein-containing complex binding"/>
    <property type="evidence" value="ECO:0000314"/>
    <property type="project" value="MGI"/>
</dbReference>
<dbReference type="GO" id="GO:0009060">
    <property type="term" value="P:aerobic respiration"/>
    <property type="evidence" value="ECO:0000303"/>
    <property type="project" value="ComplexPortal"/>
</dbReference>
<dbReference type="GO" id="GO:0007623">
    <property type="term" value="P:circadian rhythm"/>
    <property type="evidence" value="ECO:0000314"/>
    <property type="project" value="UniProtKB"/>
</dbReference>
<dbReference type="GO" id="GO:0006120">
    <property type="term" value="P:mitochondrial electron transport, NADH to ubiquinone"/>
    <property type="evidence" value="ECO:0000303"/>
    <property type="project" value="UniProtKB"/>
</dbReference>
<dbReference type="GO" id="GO:0042776">
    <property type="term" value="P:proton motive force-driven mitochondrial ATP synthesis"/>
    <property type="evidence" value="ECO:0000303"/>
    <property type="project" value="ComplexPortal"/>
</dbReference>
<dbReference type="GO" id="GO:0006814">
    <property type="term" value="P:sodium ion transport"/>
    <property type="evidence" value="ECO:0000303"/>
    <property type="project" value="UniProtKB"/>
</dbReference>
<dbReference type="GO" id="GO:0006744">
    <property type="term" value="P:ubiquinone biosynthetic process"/>
    <property type="evidence" value="ECO:0000318"/>
    <property type="project" value="GO_Central"/>
</dbReference>
<dbReference type="CDD" id="cd05271">
    <property type="entry name" value="NDUFA9_like_SDR_a"/>
    <property type="match status" value="1"/>
</dbReference>
<dbReference type="FunFam" id="3.40.50.720:FF:000246">
    <property type="entry name" value="NADH dehydrogenase [ubiquinone] 1 alpha subcomplex subunit 9, mitochondrial"/>
    <property type="match status" value="1"/>
</dbReference>
<dbReference type="Gene3D" id="3.40.50.720">
    <property type="entry name" value="NAD(P)-binding Rossmann-like Domain"/>
    <property type="match status" value="1"/>
</dbReference>
<dbReference type="InterPro" id="IPR051207">
    <property type="entry name" value="ComplexI_NDUFA9_subunit"/>
</dbReference>
<dbReference type="InterPro" id="IPR001509">
    <property type="entry name" value="Epimerase_deHydtase"/>
</dbReference>
<dbReference type="InterPro" id="IPR036291">
    <property type="entry name" value="NAD(P)-bd_dom_sf"/>
</dbReference>
<dbReference type="PANTHER" id="PTHR12126:SF10">
    <property type="entry name" value="NADH DEHYDROGENASE [UBIQUINONE] 1 ALPHA SUBCOMPLEX SUBUNIT 9, MITOCHONDRIAL"/>
    <property type="match status" value="1"/>
</dbReference>
<dbReference type="PANTHER" id="PTHR12126">
    <property type="entry name" value="NADH-UBIQUINONE OXIDOREDUCTASE 39 KDA SUBUNIT-RELATED"/>
    <property type="match status" value="1"/>
</dbReference>
<dbReference type="Pfam" id="PF01370">
    <property type="entry name" value="Epimerase"/>
    <property type="match status" value="1"/>
</dbReference>
<dbReference type="SUPFAM" id="SSF51735">
    <property type="entry name" value="NAD(P)-binding Rossmann-fold domains"/>
    <property type="match status" value="1"/>
</dbReference>
<proteinExistence type="evidence at protein level"/>
<evidence type="ECO:0000250" key="1"/>
<evidence type="ECO:0000250" key="2">
    <source>
        <dbReference type="UniProtKB" id="Q5BK63"/>
    </source>
</evidence>
<evidence type="ECO:0000250" key="3">
    <source>
        <dbReference type="UniProtKB" id="Q9DC69"/>
    </source>
</evidence>
<evidence type="ECO:0000269" key="4">
    <source>
    </source>
</evidence>
<evidence type="ECO:0000269" key="5">
    <source>
    </source>
</evidence>
<evidence type="ECO:0000269" key="6">
    <source>
    </source>
</evidence>
<evidence type="ECO:0000269" key="7">
    <source>
    </source>
</evidence>
<evidence type="ECO:0000269" key="8">
    <source>
    </source>
</evidence>
<evidence type="ECO:0000269" key="9">
    <source>
    </source>
</evidence>
<evidence type="ECO:0000269" key="10">
    <source>
    </source>
</evidence>
<evidence type="ECO:0000305" key="11"/>
<evidence type="ECO:0000305" key="12">
    <source>
    </source>
</evidence>
<evidence type="ECO:0007829" key="13">
    <source>
        <dbReference type="PDB" id="5XTB"/>
    </source>
</evidence>
<organism>
    <name type="scientific">Homo sapiens</name>
    <name type="common">Human</name>
    <dbReference type="NCBI Taxonomy" id="9606"/>
    <lineage>
        <taxon>Eukaryota</taxon>
        <taxon>Metazoa</taxon>
        <taxon>Chordata</taxon>
        <taxon>Craniata</taxon>
        <taxon>Vertebrata</taxon>
        <taxon>Euteleostomi</taxon>
        <taxon>Mammalia</taxon>
        <taxon>Eutheria</taxon>
        <taxon>Euarchontoglires</taxon>
        <taxon>Primates</taxon>
        <taxon>Haplorrhini</taxon>
        <taxon>Catarrhini</taxon>
        <taxon>Hominidae</taxon>
        <taxon>Homo</taxon>
    </lineage>
</organism>
<keyword id="KW-0002">3D-structure</keyword>
<keyword id="KW-0007">Acetylation</keyword>
<keyword id="KW-0225">Disease variant</keyword>
<keyword id="KW-0249">Electron transport</keyword>
<keyword id="KW-0274">FAD</keyword>
<keyword id="KW-0285">Flavoprotein</keyword>
<keyword id="KW-0496">Mitochondrion</keyword>
<keyword id="KW-1274">Primary mitochondrial disease</keyword>
<keyword id="KW-1267">Proteomics identification</keyword>
<keyword id="KW-1185">Reference proteome</keyword>
<keyword id="KW-0679">Respiratory chain</keyword>
<keyword id="KW-0809">Transit peptide</keyword>
<keyword id="KW-0813">Transport</keyword>
<feature type="transit peptide" description="Mitochondrion" evidence="1">
    <location>
        <begin position="1"/>
        <end position="35"/>
    </location>
</feature>
<feature type="chain" id="PRO_0000019992" description="NADH dehydrogenase [ubiquinone] 1 alpha subcomplex subunit 9, mitochondrial">
    <location>
        <begin position="36"/>
        <end position="377"/>
    </location>
</feature>
<feature type="modified residue" description="N6-succinyllysine" evidence="3">
    <location>
        <position position="175"/>
    </location>
</feature>
<feature type="modified residue" description="N6-acetyllysine" evidence="3">
    <location>
        <position position="189"/>
    </location>
</feature>
<feature type="modified residue" description="N6-acetyllysine" evidence="3">
    <location>
        <position position="370"/>
    </location>
</feature>
<feature type="sequence variant" id="VAR_078936" description="In MC1DN26; loss of function in complex I assembly; accumulation of several low and high molecular weight assembly intermediates is observed in patient fibroblasts; dbSNP:rs199592341." evidence="5 8">
    <original>R</original>
    <variation>P</variation>
    <location>
        <position position="321"/>
    </location>
</feature>
<feature type="sequence variant" id="VAR_081457" description="In MC1DN26; loss of function in complex I assembly; accumulation of several low and high molecular weight assembly intermediates is observed in patient fibroblasts; dbSNP:rs3210083." evidence="8">
    <original>R</original>
    <variation>C</variation>
    <location>
        <position position="360"/>
    </location>
</feature>
<feature type="strand" evidence="13">
    <location>
        <begin position="43"/>
        <end position="51"/>
    </location>
</feature>
<feature type="strand" evidence="13">
    <location>
        <begin position="55"/>
        <end position="57"/>
    </location>
</feature>
<feature type="turn" evidence="13">
    <location>
        <begin position="59"/>
        <end position="62"/>
    </location>
</feature>
<feature type="helix" evidence="13">
    <location>
        <begin position="64"/>
        <end position="75"/>
    </location>
</feature>
<feature type="strand" evidence="13">
    <location>
        <begin position="79"/>
        <end position="84"/>
    </location>
</feature>
<feature type="helix" evidence="13">
    <location>
        <begin position="89"/>
        <end position="97"/>
    </location>
</feature>
<feature type="helix" evidence="13">
    <location>
        <begin position="100"/>
        <end position="102"/>
    </location>
</feature>
<feature type="strand" evidence="13">
    <location>
        <begin position="103"/>
        <end position="107"/>
    </location>
</feature>
<feature type="helix" evidence="13">
    <location>
        <begin position="114"/>
        <end position="119"/>
    </location>
</feature>
<feature type="turn" evidence="13">
    <location>
        <begin position="120"/>
        <end position="122"/>
    </location>
</feature>
<feature type="strand" evidence="13">
    <location>
        <begin position="124"/>
        <end position="126"/>
    </location>
</feature>
<feature type="strand" evidence="13">
    <location>
        <begin position="137"/>
        <end position="139"/>
    </location>
</feature>
<feature type="helix" evidence="13">
    <location>
        <begin position="141"/>
        <end position="144"/>
    </location>
</feature>
<feature type="helix" evidence="13">
    <location>
        <begin position="147"/>
        <end position="159"/>
    </location>
</feature>
<feature type="strand" evidence="13">
    <location>
        <begin position="162"/>
        <end position="167"/>
    </location>
</feature>
<feature type="helix" evidence="13">
    <location>
        <begin position="179"/>
        <end position="194"/>
    </location>
</feature>
<feature type="strand" evidence="13">
    <location>
        <begin position="199"/>
        <end position="201"/>
    </location>
</feature>
<feature type="helix" evidence="13">
    <location>
        <begin position="212"/>
        <end position="223"/>
    </location>
</feature>
<feature type="strand" evidence="13">
    <location>
        <begin position="225"/>
        <end position="229"/>
    </location>
</feature>
<feature type="turn" evidence="13">
    <location>
        <begin position="230"/>
        <end position="233"/>
    </location>
</feature>
<feature type="helix" evidence="13">
    <location>
        <begin position="242"/>
        <end position="254"/>
    </location>
</feature>
<feature type="helix" evidence="13">
    <location>
        <begin position="273"/>
        <end position="284"/>
    </location>
</feature>
<feature type="strand" evidence="13">
    <location>
        <begin position="290"/>
        <end position="293"/>
    </location>
</feature>
<feature type="helix" evidence="13">
    <location>
        <begin position="295"/>
        <end position="305"/>
    </location>
</feature>
<feature type="helix" evidence="13">
    <location>
        <begin position="316"/>
        <end position="323"/>
    </location>
</feature>
<feature type="helix" evidence="13">
    <location>
        <begin position="335"/>
        <end position="337"/>
    </location>
</feature>
<feature type="helix" evidence="13">
    <location>
        <begin position="345"/>
        <end position="347"/>
    </location>
</feature>
<feature type="helix" evidence="13">
    <location>
        <begin position="349"/>
        <end position="353"/>
    </location>
</feature>
<feature type="turn" evidence="13">
    <location>
        <begin position="354"/>
        <end position="356"/>
    </location>
</feature>
<feature type="helix" evidence="13">
    <location>
        <begin position="359"/>
        <end position="362"/>
    </location>
</feature>
<feature type="helix" evidence="13">
    <location>
        <begin position="367"/>
        <end position="369"/>
    </location>
</feature>
<reference key="1">
    <citation type="submission" date="1998-02" db="EMBL/GenBank/DDBJ databases">
        <title>39 kDa subunit of NADH-ubiquinone oxidoreductase.</title>
        <authorList>
            <person name="Loeffen J.L.C.M."/>
            <person name="Smeets R.J.P."/>
            <person name="Triepels R."/>
            <person name="Ruitenbeek W."/>
            <person name="Smeitink J.A.M."/>
            <person name="van den Heuvel L."/>
        </authorList>
    </citation>
    <scope>NUCLEOTIDE SEQUENCE [MRNA]</scope>
</reference>
<reference key="2">
    <citation type="journal article" date="2004" name="Genome Res.">
        <title>The status, quality, and expansion of the NIH full-length cDNA project: the Mammalian Gene Collection (MGC).</title>
        <authorList>
            <consortium name="The MGC Project Team"/>
        </authorList>
    </citation>
    <scope>NUCLEOTIDE SEQUENCE [LARGE SCALE MRNA]</scope>
    <source>
        <tissue>Colon</tissue>
        <tissue>Muscle</tissue>
        <tissue>Skeletal muscle</tissue>
    </source>
</reference>
<reference key="3">
    <citation type="journal article" date="1994" name="Nat. Genet.">
        <title>Purification of CpG islands using a methylated DNA binding column.</title>
        <authorList>
            <person name="Cross S.H."/>
            <person name="Charlton J.A."/>
            <person name="Nan X."/>
            <person name="Bird A.P."/>
        </authorList>
    </citation>
    <scope>NUCLEOTIDE SEQUENCE [GENOMIC DNA] OF 1-33</scope>
    <source>
        <tissue>Blood</tissue>
    </source>
</reference>
<reference key="4">
    <citation type="journal article" date="1993" name="Genomics">
        <title>Construction and evaluation of a hncDNA library of human 12p transcribed sequences derived from a somatic cell hybrid.</title>
        <authorList>
            <person name="Baens M."/>
            <person name="Chaffanet M."/>
            <person name="Cassiman J.-J."/>
            <person name="van den Berghe H."/>
            <person name="Marynen P."/>
        </authorList>
    </citation>
    <scope>NUCLEOTIDE SEQUENCE [MRNA] OF 3-377</scope>
    <source>
        <tissue>Liver</tissue>
    </source>
</reference>
<reference key="5">
    <citation type="journal article" date="2003" name="J. Biol. Chem.">
        <title>The subunit composition of the human NADH dehydrogenase obtained by rapid one-step immunopurification.</title>
        <authorList>
            <person name="Murray J."/>
            <person name="Zhang B."/>
            <person name="Taylor S.W."/>
            <person name="Oglesbee D."/>
            <person name="Fahy E."/>
            <person name="Marusich M.F."/>
            <person name="Ghosh S.S."/>
            <person name="Capaldi R.A."/>
        </authorList>
    </citation>
    <scope>IDENTIFICATION IN THE NADH-UBIQUINONE OXIDOREDUCTASE COMPLEX</scope>
    <scope>IDENTIFICATION BY MASS SPECTROMETRY</scope>
    <scope>SUBCELLULAR LOCATION</scope>
</reference>
<reference key="6">
    <citation type="journal article" date="2011" name="BMC Syst. Biol.">
        <title>Initial characterization of the human central proteome.</title>
        <authorList>
            <person name="Burkard T.R."/>
            <person name="Planyavsky M."/>
            <person name="Kaupe I."/>
            <person name="Breitwieser F.P."/>
            <person name="Buerckstuemmer T."/>
            <person name="Bennett K.L."/>
            <person name="Superti-Furga G."/>
            <person name="Colinge J."/>
        </authorList>
    </citation>
    <scope>IDENTIFICATION BY MASS SPECTROMETRY [LARGE SCALE ANALYSIS]</scope>
</reference>
<reference key="7">
    <citation type="journal article" date="2012" name="Biochem. J.">
        <title>Identification of a molecular component of the mitochondrial acetyl transferase program; a novel role for GCN5L1.</title>
        <authorList>
            <person name="Scott I."/>
            <person name="Webster B.R."/>
            <person name="Li J.H."/>
            <person name="Sack M.N."/>
        </authorList>
    </citation>
    <scope>INTERACTION WITH BLOC1S1</scope>
    <scope>ACETYLATION</scope>
</reference>
<reference key="8">
    <citation type="journal article" date="2014" name="J. Proteomics">
        <title>An enzyme assisted RP-RPLC approach for in-depth analysis of human liver phosphoproteome.</title>
        <authorList>
            <person name="Bian Y."/>
            <person name="Song C."/>
            <person name="Cheng K."/>
            <person name="Dong M."/>
            <person name="Wang F."/>
            <person name="Huang J."/>
            <person name="Sun D."/>
            <person name="Wang L."/>
            <person name="Ye M."/>
            <person name="Zou H."/>
        </authorList>
    </citation>
    <scope>IDENTIFICATION BY MASS SPECTROMETRY [LARGE SCALE ANALYSIS]</scope>
    <source>
        <tissue>Liver</tissue>
    </source>
</reference>
<reference key="9">
    <citation type="journal article" date="2015" name="Proteomics">
        <title>N-terminome analysis of the human mitochondrial proteome.</title>
        <authorList>
            <person name="Vaca Jacome A.S."/>
            <person name="Rabilloud T."/>
            <person name="Schaeffer-Reiss C."/>
            <person name="Rompais M."/>
            <person name="Ayoub D."/>
            <person name="Lane L."/>
            <person name="Bairoch A."/>
            <person name="Van Dorsselaer A."/>
            <person name="Carapito C."/>
        </authorList>
    </citation>
    <scope>IDENTIFICATION BY MASS SPECTROMETRY [LARGE SCALE ANALYSIS]</scope>
</reference>
<reference key="10">
    <citation type="journal article" date="2016" name="Nature">
        <title>Accessory subunits are integral for assembly and function of human mitochondrial complex I.</title>
        <authorList>
            <person name="Stroud D.A."/>
            <person name="Surgenor E.E."/>
            <person name="Formosa L.E."/>
            <person name="Reljic B."/>
            <person name="Frazier A.E."/>
            <person name="Dibley M.G."/>
            <person name="Osellame L.D."/>
            <person name="Stait T."/>
            <person name="Beilharz T.H."/>
            <person name="Thorburn D.R."/>
            <person name="Salim A."/>
            <person name="Ryan M.T."/>
        </authorList>
    </citation>
    <scope>FUNCTION</scope>
    <scope>IDENTIFICATION IN THE NADH-UBIQUINONE OXIDOREDUCTASE COMPLEX</scope>
</reference>
<reference key="11">
    <citation type="journal article" date="2012" name="J. Med. Genet.">
        <title>Defective NDUFA9 as a novel cause of neonatally fatal complex I disease.</title>
        <authorList>
            <person name="van den Bosch B.J."/>
            <person name="Gerards M."/>
            <person name="Sluiter W."/>
            <person name="Stegmann A.P."/>
            <person name="Jongen E.L."/>
            <person name="Hellebrekers D.M."/>
            <person name="Oegema R."/>
            <person name="Lambrichs E.H."/>
            <person name="Prokisch H."/>
            <person name="Danhauser K."/>
            <person name="Schoonderwoerd K."/>
            <person name="de Coo I.F."/>
            <person name="Smeets H.J."/>
        </authorList>
    </citation>
    <scope>INVOLVEMENT IN MC1DN26</scope>
    <scope>VARIANT MC1DN26 PRO-321</scope>
    <scope>FUNCTION</scope>
</reference>
<reference key="12">
    <citation type="journal article" date="2017" name="Mol. Cell">
        <title>CLOCK acetylates ASS1 to drive circadian rhythm of ureagenesis.</title>
        <authorList>
            <person name="Lin R."/>
            <person name="Mo Y."/>
            <person name="Zha H."/>
            <person name="Qu Z."/>
            <person name="Xie P."/>
            <person name="Zhu Z.J."/>
            <person name="Xu Y."/>
            <person name="Xiong Y."/>
            <person name="Guan K.L."/>
        </authorList>
    </citation>
    <scope>ACETYLATION</scope>
    <scope>INTERACTION WITH CLOCK</scope>
</reference>
<reference key="13">
    <citation type="journal article" date="2018" name="Clin. Genet.">
        <title>NDUFA9 point mutations cause a variable mitochondrial complex I assembly defect.</title>
        <authorList>
            <person name="Baertling F."/>
            <person name="Sanchez-Caballero L."/>
            <person name="van den Brand M.A.M."/>
            <person name="Fung C.W."/>
            <person name="Chan S.H."/>
            <person name="Wong V.C."/>
            <person name="Hellebrekers D.M.E."/>
            <person name="de Coo I.F.M."/>
            <person name="Smeitink J.A.M."/>
            <person name="Rodenburg R.J.T."/>
            <person name="Nijtmans L.G.J."/>
        </authorList>
    </citation>
    <scope>FUNCTION</scope>
    <scope>INVOLVEMENT IN MC1DN26</scope>
    <scope>VARIANTS MC1DN26 PRO-321 AND CYS-360</scope>
    <scope>CHARACTERIZATION OF VARIANTS MC1DN26 PRO-321 AND CYS-360</scope>
</reference>
<reference key="14">
    <citation type="journal article" date="2019" name="IScience">
        <title>Rewiring of the Human Mitochondrial Interactome during Neuronal Reprogramming Reveals Regulators of the Respirasome and Neurogenesis.</title>
        <authorList>
            <person name="Moutaoufik M.T."/>
            <person name="Malty R."/>
            <person name="Amin S."/>
            <person name="Zhang Q."/>
            <person name="Phanse S."/>
            <person name="Gagarinova A."/>
            <person name="Zilocchi M."/>
            <person name="Hoell L."/>
            <person name="Minic Z."/>
            <person name="Gagarinova M."/>
            <person name="Aoki H."/>
            <person name="Stockwell J."/>
            <person name="Jessulat M."/>
            <person name="Goebels F."/>
            <person name="Broderick K."/>
            <person name="Scott N.E."/>
            <person name="Vlasblom J."/>
            <person name="Musso G."/>
            <person name="Prasad B."/>
            <person name="Lamantea E."/>
            <person name="Garavaglia B."/>
            <person name="Rajput A."/>
            <person name="Murayama K."/>
            <person name="Okazaki Y."/>
            <person name="Foster L.J."/>
            <person name="Bader G.D."/>
            <person name="Cayabyab F.S."/>
            <person name="Babu M."/>
        </authorList>
    </citation>
    <scope>IDENTIFICATION BY MASS SPECTROMETRY</scope>
    <scope>INTERACTION WITH RAB5IF</scope>
</reference>
<protein>
    <recommendedName>
        <fullName>NADH dehydrogenase [ubiquinone] 1 alpha subcomplex subunit 9, mitochondrial</fullName>
    </recommendedName>
    <alternativeName>
        <fullName>Complex I-39kD</fullName>
        <shortName>CI-39kD</shortName>
    </alternativeName>
    <alternativeName>
        <fullName>NADH-ubiquinone oxidoreductase 39 kDa subunit</fullName>
    </alternativeName>
</protein>
<comment type="function">
    <text evidence="5 7 8">Accessory subunit of the mitochondrial membrane respiratory chain NADH dehydrogenase (Complex I), that is believed not to be involved in catalysis. Required for proper complex I assembly (PubMed:28671271). Complex I functions in the transfer of electrons from NADH to the respiratory chain. The immediate electron acceptor for the enzyme is believed to be ubiquinone.</text>
</comment>
<comment type="cofactor">
    <cofactor>
        <name>FAD</name>
        <dbReference type="ChEBI" id="CHEBI:57692"/>
    </cofactor>
    <text>Binds 1 FAD per subunit.</text>
</comment>
<comment type="subunit">
    <text evidence="2 4 6 7 9 10">Complex I is composed of 45 different subunits. This a component of the hydrophobic protein fraction (PubMed:12611891, PubMed:27626371). Interacts with BLOC1S1 (PubMed:22309213). Interacts with SLC2A4 (By similarity). Interacts with CLOCK (PubMed:28985504). Interacts with RAB5IF (PubMed:31536960).</text>
</comment>
<comment type="interaction">
    <interactant intactId="EBI-1045087">
        <id>Q16795</id>
    </interactant>
    <interactant intactId="EBI-348630">
        <id>P78537</id>
        <label>BLOC1S1</label>
    </interactant>
    <organismsDiffer>false</organismsDiffer>
    <experiments>3</experiments>
</comment>
<comment type="interaction">
    <interactant intactId="EBI-1045087">
        <id>Q16795</id>
    </interactant>
    <interactant intactId="EBI-3867333">
        <id>A8MQ03</id>
        <label>CYSRT1</label>
    </interactant>
    <organismsDiffer>false</organismsDiffer>
    <experiments>3</experiments>
</comment>
<comment type="interaction">
    <interactant intactId="EBI-1045087">
        <id>Q16795</id>
    </interactant>
    <interactant intactId="EBI-466029">
        <id>P42858</id>
        <label>HTT</label>
    </interactant>
    <organismsDiffer>false</organismsDiffer>
    <experiments>7</experiments>
</comment>
<comment type="interaction">
    <interactant intactId="EBI-1045087">
        <id>Q16795</id>
    </interactant>
    <interactant intactId="EBI-11962084">
        <id>Q3LI66</id>
        <label>KRTAP6-2</label>
    </interactant>
    <organismsDiffer>false</organismsDiffer>
    <experiments>3</experiments>
</comment>
<comment type="interaction">
    <interactant intactId="EBI-1045087">
        <id>Q16795</id>
    </interactant>
    <interactant intactId="EBI-717871">
        <id>Q8NC60</id>
        <label>NOA1</label>
    </interactant>
    <organismsDiffer>false</organismsDiffer>
    <experiments>2</experiments>
</comment>
<comment type="subcellular location">
    <subcellularLocation>
        <location evidence="12">Mitochondrion matrix</location>
    </subcellularLocation>
</comment>
<comment type="PTM">
    <text evidence="6 9">Acetylated on lysine residues. BLOC1S1 is required for acetylation (PubMed:22309213). Acetylated by CLOCK in a circadian manner (PubMed:28985504).</text>
</comment>
<comment type="disease" evidence="5 8">
    <disease id="DI-05422">
        <name>Mitochondrial complex I deficiency, nuclear type 26</name>
        <acronym>MC1DN26</acronym>
        <description>A form of mitochondrial complex I deficiency, the most common biochemical signature of mitochondrial disorders, a group of highly heterogeneous conditions characterized by defective oxidative phosphorylation, which collectively affects 1 in 5-10000 live births. Clinical disorders have variable severity, ranging from lethal neonatal disease to adult-onset neurodegenerative disorders. Phenotypes include macrocephaly with progressive leukodystrophy, non-specific encephalopathy, cardiomyopathy, myopathy, liver disease, Leigh syndrome, Leber hereditary optic neuropathy, and some forms of Parkinson disease. MC1DN26 transmission pattern is consistent with autosomal recessive inheritance.</description>
        <dbReference type="MIM" id="618247"/>
    </disease>
    <text>The disease is caused by variants affecting the gene represented in this entry.</text>
</comment>
<comment type="similarity">
    <text evidence="11">Belongs to the complex I NDUFA9 subunit family.</text>
</comment>
<comment type="sequence caution" evidence="11">
    <conflict type="frameshift">
        <sequence resource="EMBL-CDS" id="CAA54099"/>
    </conflict>
</comment>
<accession>Q16795</accession>
<accession>Q14076</accession>
<accession>Q2NKX0</accession>
<sequence>MAAAAQSRVVRVLSMSRSAITAIATSVCHGPPCRQLHHALMPHGKGGRSSVSGIVATVFGATGFLGRYVVNHLGRMGSQVIIPYRCDKYDIMHLRPMGDLGQLLFLEWDARDKDSIRRVVQHSNVVINLIGRDWETKNFDFEDVFVKIPQAIAQLSKEAGVEKFIHVSHLNANIKSSSRYLRNKAVGEKVVRDAFPEAIIVKPSDIFGREDRFLNSFASMHRFGPIPLGSLGWKTVKQPVYVVDVSKGIVNAVKDPDANGKSFAFVGPSRYLLFHLVKYIFAVAHRLFLPFPLPLFAYRWVARVFEISPFEPWITRDKVERMHITDMKLPHLPGLEDLGIQATPLELKAIEVLRRHRTYRWLSAEIEDVKPAKTVNI</sequence>
<name>NDUA9_HUMAN</name>